<comment type="function">
    <text evidence="2 3">Palmitoyltransferase that catalyzes the addition of palmitate onto various protein substrates (By similarity). Has a palmitoyltransferase activity toward gephyrin/GPHN, regulating its clustering at synapses and its function in gamma-aminobutyric acid receptor clustering (By similarity). Acts as an inhibitor of the NLRP3 inflammasome by mediating palmitoylation of NLRP3, thereby promoting NLRP3 degradation by the chaperone-mediated autophagy (CMA) process (By similarity).</text>
</comment>
<comment type="catalytic activity">
    <reaction evidence="2">
        <text>L-cysteinyl-[protein] + hexadecanoyl-CoA = S-hexadecanoyl-L-cysteinyl-[protein] + CoA</text>
        <dbReference type="Rhea" id="RHEA:36683"/>
        <dbReference type="Rhea" id="RHEA-COMP:10131"/>
        <dbReference type="Rhea" id="RHEA-COMP:11032"/>
        <dbReference type="ChEBI" id="CHEBI:29950"/>
        <dbReference type="ChEBI" id="CHEBI:57287"/>
        <dbReference type="ChEBI" id="CHEBI:57379"/>
        <dbReference type="ChEBI" id="CHEBI:74151"/>
        <dbReference type="EC" id="2.3.1.225"/>
    </reaction>
    <physiologicalReaction direction="left-to-right" evidence="2">
        <dbReference type="Rhea" id="RHEA:36684"/>
    </physiologicalReaction>
</comment>
<comment type="subcellular location">
    <subcellularLocation>
        <location evidence="2">Golgi apparatus membrane</location>
        <topology evidence="4">Multi-pass membrane protein</topology>
    </subcellularLocation>
    <subcellularLocation>
        <location evidence="3">Endoplasmic reticulum membrane</location>
        <topology evidence="4">Multi-pass membrane protein</topology>
    </subcellularLocation>
</comment>
<comment type="domain">
    <text evidence="1">The DHHC domain is required for palmitoyltransferase activity.</text>
</comment>
<comment type="similarity">
    <text evidence="6">Belongs to the DHHC palmitoyltransferase family.</text>
</comment>
<protein>
    <recommendedName>
        <fullName evidence="6">Palmitoyltransferase ZDHHC12-A</fullName>
        <ecNumber evidence="2">2.3.1.225</ecNumber>
    </recommendedName>
    <alternativeName>
        <fullName evidence="6">Zinc finger DHHC domain-containing protein 12-A</fullName>
    </alternativeName>
</protein>
<organism>
    <name type="scientific">Danio rerio</name>
    <name type="common">Zebrafish</name>
    <name type="synonym">Brachydanio rerio</name>
    <dbReference type="NCBI Taxonomy" id="7955"/>
    <lineage>
        <taxon>Eukaryota</taxon>
        <taxon>Metazoa</taxon>
        <taxon>Chordata</taxon>
        <taxon>Craniata</taxon>
        <taxon>Vertebrata</taxon>
        <taxon>Euteleostomi</taxon>
        <taxon>Actinopterygii</taxon>
        <taxon>Neopterygii</taxon>
        <taxon>Teleostei</taxon>
        <taxon>Ostariophysi</taxon>
        <taxon>Cypriniformes</taxon>
        <taxon>Danionidae</taxon>
        <taxon>Danioninae</taxon>
        <taxon>Danio</taxon>
    </lineage>
</organism>
<reference key="1">
    <citation type="journal article" date="2013" name="Nature">
        <title>The zebrafish reference genome sequence and its relationship to the human genome.</title>
        <authorList>
            <person name="Howe K."/>
            <person name="Clark M.D."/>
            <person name="Torroja C.F."/>
            <person name="Torrance J."/>
            <person name="Berthelot C."/>
            <person name="Muffato M."/>
            <person name="Collins J.E."/>
            <person name="Humphray S."/>
            <person name="McLaren K."/>
            <person name="Matthews L."/>
            <person name="McLaren S."/>
            <person name="Sealy I."/>
            <person name="Caccamo M."/>
            <person name="Churcher C."/>
            <person name="Scott C."/>
            <person name="Barrett J.C."/>
            <person name="Koch R."/>
            <person name="Rauch G.J."/>
            <person name="White S."/>
            <person name="Chow W."/>
            <person name="Kilian B."/>
            <person name="Quintais L.T."/>
            <person name="Guerra-Assuncao J.A."/>
            <person name="Zhou Y."/>
            <person name="Gu Y."/>
            <person name="Yen J."/>
            <person name="Vogel J.H."/>
            <person name="Eyre T."/>
            <person name="Redmond S."/>
            <person name="Banerjee R."/>
            <person name="Chi J."/>
            <person name="Fu B."/>
            <person name="Langley E."/>
            <person name="Maguire S.F."/>
            <person name="Laird G.K."/>
            <person name="Lloyd D."/>
            <person name="Kenyon E."/>
            <person name="Donaldson S."/>
            <person name="Sehra H."/>
            <person name="Almeida-King J."/>
            <person name="Loveland J."/>
            <person name="Trevanion S."/>
            <person name="Jones M."/>
            <person name="Quail M."/>
            <person name="Willey D."/>
            <person name="Hunt A."/>
            <person name="Burton J."/>
            <person name="Sims S."/>
            <person name="McLay K."/>
            <person name="Plumb B."/>
            <person name="Davis J."/>
            <person name="Clee C."/>
            <person name="Oliver K."/>
            <person name="Clark R."/>
            <person name="Riddle C."/>
            <person name="Elliot D."/>
            <person name="Threadgold G."/>
            <person name="Harden G."/>
            <person name="Ware D."/>
            <person name="Begum S."/>
            <person name="Mortimore B."/>
            <person name="Kerry G."/>
            <person name="Heath P."/>
            <person name="Phillimore B."/>
            <person name="Tracey A."/>
            <person name="Corby N."/>
            <person name="Dunn M."/>
            <person name="Johnson C."/>
            <person name="Wood J."/>
            <person name="Clark S."/>
            <person name="Pelan S."/>
            <person name="Griffiths G."/>
            <person name="Smith M."/>
            <person name="Glithero R."/>
            <person name="Howden P."/>
            <person name="Barker N."/>
            <person name="Lloyd C."/>
            <person name="Stevens C."/>
            <person name="Harley J."/>
            <person name="Holt K."/>
            <person name="Panagiotidis G."/>
            <person name="Lovell J."/>
            <person name="Beasley H."/>
            <person name="Henderson C."/>
            <person name="Gordon D."/>
            <person name="Auger K."/>
            <person name="Wright D."/>
            <person name="Collins J."/>
            <person name="Raisen C."/>
            <person name="Dyer L."/>
            <person name="Leung K."/>
            <person name="Robertson L."/>
            <person name="Ambridge K."/>
            <person name="Leongamornlert D."/>
            <person name="McGuire S."/>
            <person name="Gilderthorp R."/>
            <person name="Griffiths C."/>
            <person name="Manthravadi D."/>
            <person name="Nichol S."/>
            <person name="Barker G."/>
            <person name="Whitehead S."/>
            <person name="Kay M."/>
            <person name="Brown J."/>
            <person name="Murnane C."/>
            <person name="Gray E."/>
            <person name="Humphries M."/>
            <person name="Sycamore N."/>
            <person name="Barker D."/>
            <person name="Saunders D."/>
            <person name="Wallis J."/>
            <person name="Babbage A."/>
            <person name="Hammond S."/>
            <person name="Mashreghi-Mohammadi M."/>
            <person name="Barr L."/>
            <person name="Martin S."/>
            <person name="Wray P."/>
            <person name="Ellington A."/>
            <person name="Matthews N."/>
            <person name="Ellwood M."/>
            <person name="Woodmansey R."/>
            <person name="Clark G."/>
            <person name="Cooper J."/>
            <person name="Tromans A."/>
            <person name="Grafham D."/>
            <person name="Skuce C."/>
            <person name="Pandian R."/>
            <person name="Andrews R."/>
            <person name="Harrison E."/>
            <person name="Kimberley A."/>
            <person name="Garnett J."/>
            <person name="Fosker N."/>
            <person name="Hall R."/>
            <person name="Garner P."/>
            <person name="Kelly D."/>
            <person name="Bird C."/>
            <person name="Palmer S."/>
            <person name="Gehring I."/>
            <person name="Berger A."/>
            <person name="Dooley C.M."/>
            <person name="Ersan-Urun Z."/>
            <person name="Eser C."/>
            <person name="Geiger H."/>
            <person name="Geisler M."/>
            <person name="Karotki L."/>
            <person name="Kirn A."/>
            <person name="Konantz J."/>
            <person name="Konantz M."/>
            <person name="Oberlander M."/>
            <person name="Rudolph-Geiger S."/>
            <person name="Teucke M."/>
            <person name="Lanz C."/>
            <person name="Raddatz G."/>
            <person name="Osoegawa K."/>
            <person name="Zhu B."/>
            <person name="Rapp A."/>
            <person name="Widaa S."/>
            <person name="Langford C."/>
            <person name="Yang F."/>
            <person name="Schuster S.C."/>
            <person name="Carter N.P."/>
            <person name="Harrow J."/>
            <person name="Ning Z."/>
            <person name="Herrero J."/>
            <person name="Searle S.M."/>
            <person name="Enright A."/>
            <person name="Geisler R."/>
            <person name="Plasterk R.H."/>
            <person name="Lee C."/>
            <person name="Westerfield M."/>
            <person name="de Jong P.J."/>
            <person name="Zon L.I."/>
            <person name="Postlethwait J.H."/>
            <person name="Nusslein-Volhard C."/>
            <person name="Hubbard T.J."/>
            <person name="Roest Crollius H."/>
            <person name="Rogers J."/>
            <person name="Stemple D.L."/>
        </authorList>
    </citation>
    <scope>NUCLEOTIDE SEQUENCE [LARGE SCALE GENOMIC DNA]</scope>
    <source>
        <strain>Tuebingen</strain>
    </source>
</reference>
<dbReference type="EC" id="2.3.1.225" evidence="2"/>
<dbReference type="EMBL" id="BX088526">
    <property type="status" value="NOT_ANNOTATED_CDS"/>
    <property type="molecule type" value="Genomic_DNA"/>
</dbReference>
<dbReference type="RefSeq" id="NP_001410774.1">
    <property type="nucleotide sequence ID" value="NM_001423845.1"/>
</dbReference>
<dbReference type="RefSeq" id="XP_002663098.1">
    <property type="nucleotide sequence ID" value="XM_002663052.4"/>
</dbReference>
<dbReference type="SMR" id="B0S5D5"/>
<dbReference type="FunCoup" id="B0S5D5">
    <property type="interactions" value="3"/>
</dbReference>
<dbReference type="PaxDb" id="7955-ENSDARP00000101673"/>
<dbReference type="Ensembl" id="ENSDART00000110482">
    <property type="protein sequence ID" value="ENSDARP00000101673"/>
    <property type="gene ID" value="ENSDARG00000076632"/>
</dbReference>
<dbReference type="GeneID" id="100332332"/>
<dbReference type="AGR" id="ZFIN:ZDB-GENE-081104-40"/>
<dbReference type="ZFIN" id="ZDB-GENE-081104-40">
    <property type="gene designation" value="zdhhc12a"/>
</dbReference>
<dbReference type="eggNOG" id="KOG1311">
    <property type="taxonomic scope" value="Eukaryota"/>
</dbReference>
<dbReference type="HOGENOM" id="CLU_031257_2_0_1"/>
<dbReference type="InParanoid" id="B0S5D5"/>
<dbReference type="OMA" id="QRRCGYC"/>
<dbReference type="OrthoDB" id="331948at2759"/>
<dbReference type="PhylomeDB" id="B0S5D5"/>
<dbReference type="TreeFam" id="TF329809"/>
<dbReference type="PRO" id="PR:B0S5D5"/>
<dbReference type="Proteomes" id="UP000000437">
    <property type="component" value="Chromosome 8"/>
</dbReference>
<dbReference type="Bgee" id="ENSDARG00000076632">
    <property type="expression patterns" value="Expressed in mature ovarian follicle and 20 other cell types or tissues"/>
</dbReference>
<dbReference type="GO" id="GO:0005783">
    <property type="term" value="C:endoplasmic reticulum"/>
    <property type="evidence" value="ECO:0000318"/>
    <property type="project" value="GO_Central"/>
</dbReference>
<dbReference type="GO" id="GO:0005789">
    <property type="term" value="C:endoplasmic reticulum membrane"/>
    <property type="evidence" value="ECO:0007669"/>
    <property type="project" value="UniProtKB-SubCell"/>
</dbReference>
<dbReference type="GO" id="GO:0005794">
    <property type="term" value="C:Golgi apparatus"/>
    <property type="evidence" value="ECO:0000250"/>
    <property type="project" value="UniProtKB"/>
</dbReference>
<dbReference type="GO" id="GO:0000139">
    <property type="term" value="C:Golgi membrane"/>
    <property type="evidence" value="ECO:0007669"/>
    <property type="project" value="UniProtKB-SubCell"/>
</dbReference>
<dbReference type="GO" id="GO:0019706">
    <property type="term" value="F:protein-cysteine S-palmitoyltransferase activity"/>
    <property type="evidence" value="ECO:0000250"/>
    <property type="project" value="UniProtKB"/>
</dbReference>
<dbReference type="GO" id="GO:1900226">
    <property type="term" value="P:negative regulation of NLRP3 inflammasome complex assembly"/>
    <property type="evidence" value="ECO:0000250"/>
    <property type="project" value="UniProtKB"/>
</dbReference>
<dbReference type="GO" id="GO:0018230">
    <property type="term" value="P:peptidyl-L-cysteine S-palmitoylation"/>
    <property type="evidence" value="ECO:0000250"/>
    <property type="project" value="UniProtKB"/>
</dbReference>
<dbReference type="GO" id="GO:0006612">
    <property type="term" value="P:protein targeting to membrane"/>
    <property type="evidence" value="ECO:0000318"/>
    <property type="project" value="GO_Central"/>
</dbReference>
<dbReference type="InterPro" id="IPR001594">
    <property type="entry name" value="Palmitoyltrfase_DHHC"/>
</dbReference>
<dbReference type="InterPro" id="IPR039859">
    <property type="entry name" value="PFA4/ZDH16/20/ERF2-like"/>
</dbReference>
<dbReference type="PANTHER" id="PTHR22883:SF301">
    <property type="entry name" value="PALMITOYLTRANSFERASE ZDHHC12"/>
    <property type="match status" value="1"/>
</dbReference>
<dbReference type="PANTHER" id="PTHR22883">
    <property type="entry name" value="ZINC FINGER DHHC DOMAIN CONTAINING PROTEIN"/>
    <property type="match status" value="1"/>
</dbReference>
<dbReference type="Pfam" id="PF01529">
    <property type="entry name" value="DHHC"/>
    <property type="match status" value="1"/>
</dbReference>
<dbReference type="PROSITE" id="PS50216">
    <property type="entry name" value="DHHC"/>
    <property type="match status" value="1"/>
</dbReference>
<name>ZD12A_DANRE</name>
<evidence type="ECO:0000250" key="1">
    <source>
        <dbReference type="UniProtKB" id="Q8IUH5"/>
    </source>
</evidence>
<evidence type="ECO:0000250" key="2">
    <source>
        <dbReference type="UniProtKB" id="Q8VC90"/>
    </source>
</evidence>
<evidence type="ECO:0000250" key="3">
    <source>
        <dbReference type="UniProtKB" id="Q96GR4"/>
    </source>
</evidence>
<evidence type="ECO:0000255" key="4"/>
<evidence type="ECO:0000255" key="5">
    <source>
        <dbReference type="PROSITE-ProRule" id="PRU00067"/>
    </source>
</evidence>
<evidence type="ECO:0000305" key="6"/>
<evidence type="ECO:0000312" key="7">
    <source>
        <dbReference type="ZFIN" id="ZDB-GENE-081104-40"/>
    </source>
</evidence>
<gene>
    <name evidence="7" type="primary">zdhhc12a</name>
</gene>
<accession>B0S5D5</accession>
<feature type="chain" id="PRO_0000451058" description="Palmitoyltransferase ZDHHC12-A">
    <location>
        <begin position="1"/>
        <end position="270"/>
    </location>
</feature>
<feature type="topological domain" description="Cytoplasmic" evidence="6">
    <location>
        <begin position="1"/>
        <end position="8"/>
    </location>
</feature>
<feature type="transmembrane region" description="Helical" evidence="4">
    <location>
        <begin position="9"/>
        <end position="29"/>
    </location>
</feature>
<feature type="topological domain" description="Lumenal" evidence="6">
    <location>
        <begin position="30"/>
        <end position="45"/>
    </location>
</feature>
<feature type="transmembrane region" description="Helical" evidence="4">
    <location>
        <begin position="46"/>
        <end position="66"/>
    </location>
</feature>
<feature type="topological domain" description="Cytoplasmic" evidence="6">
    <location>
        <begin position="67"/>
        <end position="145"/>
    </location>
</feature>
<feature type="transmembrane region" description="Helical" evidence="4">
    <location>
        <begin position="146"/>
        <end position="166"/>
    </location>
</feature>
<feature type="topological domain" description="Lumenal" evidence="6">
    <location>
        <begin position="167"/>
        <end position="182"/>
    </location>
</feature>
<feature type="transmembrane region" description="Helical" evidence="4">
    <location>
        <begin position="183"/>
        <end position="203"/>
    </location>
</feature>
<feature type="topological domain" description="Cytoplasmic" evidence="6">
    <location>
        <begin position="204"/>
        <end position="270"/>
    </location>
</feature>
<feature type="domain" description="DHHC" evidence="5">
    <location>
        <begin position="102"/>
        <end position="152"/>
    </location>
</feature>
<feature type="active site" description="S-palmitoyl cysteine intermediate" evidence="2">
    <location>
        <position position="132"/>
    </location>
</feature>
<sequence length="270" mass="31324">MNKSLFKSGCLVRTAHVILTWIITLILFLHNTDLRRCQERGDLLQPLVFSSVLLLSVLLYFTVSLMDPGFVLSDSQTETASGDGDEELEAMIPQEQNSIKQRRCGYCFLLQPMRARHCKWCKRCVRRFDHHCPWIDNCVGELNHRWFLLYLCVQFTAVCWGLQSAWSGFISAPSWQQWFTQNVFLLVAFAVTAVFSVVLLLLLCIHAYLASVNCTTWEFMSRHRILYLKHVDSEENPFDRGVFCNLWSFCCVCGTVAWEKMYIRHNNASV</sequence>
<keyword id="KW-0012">Acyltransferase</keyword>
<keyword id="KW-0256">Endoplasmic reticulum</keyword>
<keyword id="KW-0333">Golgi apparatus</keyword>
<keyword id="KW-0449">Lipoprotein</keyword>
<keyword id="KW-0472">Membrane</keyword>
<keyword id="KW-0564">Palmitate</keyword>
<keyword id="KW-1185">Reference proteome</keyword>
<keyword id="KW-0808">Transferase</keyword>
<keyword id="KW-0812">Transmembrane</keyword>
<keyword id="KW-1133">Transmembrane helix</keyword>
<proteinExistence type="inferred from homology"/>